<dbReference type="EC" id="3.1.26.3" evidence="1"/>
<dbReference type="EMBL" id="AE009948">
    <property type="protein sequence ID" value="AAM99610.1"/>
    <property type="status" value="ALT_INIT"/>
    <property type="molecule type" value="Genomic_DNA"/>
</dbReference>
<dbReference type="RefSeq" id="NP_687738.1">
    <property type="nucleotide sequence ID" value="NC_004116.1"/>
</dbReference>
<dbReference type="RefSeq" id="WP_000661526.1">
    <property type="nucleotide sequence ID" value="NC_004116.1"/>
</dbReference>
<dbReference type="SMR" id="Q8E0K7"/>
<dbReference type="STRING" id="208435.SAG0723"/>
<dbReference type="GeneID" id="66885626"/>
<dbReference type="KEGG" id="sag:SAG0723"/>
<dbReference type="PATRIC" id="fig|208435.3.peg.729"/>
<dbReference type="HOGENOM" id="CLU_000907_1_3_9"/>
<dbReference type="OrthoDB" id="9805026at2"/>
<dbReference type="Proteomes" id="UP000000821">
    <property type="component" value="Chromosome"/>
</dbReference>
<dbReference type="GO" id="GO:0005737">
    <property type="term" value="C:cytoplasm"/>
    <property type="evidence" value="ECO:0007669"/>
    <property type="project" value="UniProtKB-SubCell"/>
</dbReference>
<dbReference type="GO" id="GO:0003725">
    <property type="term" value="F:double-stranded RNA binding"/>
    <property type="evidence" value="ECO:0007669"/>
    <property type="project" value="TreeGrafter"/>
</dbReference>
<dbReference type="GO" id="GO:0046872">
    <property type="term" value="F:metal ion binding"/>
    <property type="evidence" value="ECO:0007669"/>
    <property type="project" value="UniProtKB-KW"/>
</dbReference>
<dbReference type="GO" id="GO:0004525">
    <property type="term" value="F:ribonuclease III activity"/>
    <property type="evidence" value="ECO:0007669"/>
    <property type="project" value="UniProtKB-UniRule"/>
</dbReference>
<dbReference type="GO" id="GO:0019843">
    <property type="term" value="F:rRNA binding"/>
    <property type="evidence" value="ECO:0007669"/>
    <property type="project" value="UniProtKB-KW"/>
</dbReference>
<dbReference type="GO" id="GO:0006397">
    <property type="term" value="P:mRNA processing"/>
    <property type="evidence" value="ECO:0007669"/>
    <property type="project" value="UniProtKB-UniRule"/>
</dbReference>
<dbReference type="GO" id="GO:0010468">
    <property type="term" value="P:regulation of gene expression"/>
    <property type="evidence" value="ECO:0007669"/>
    <property type="project" value="TreeGrafter"/>
</dbReference>
<dbReference type="GO" id="GO:0006364">
    <property type="term" value="P:rRNA processing"/>
    <property type="evidence" value="ECO:0007669"/>
    <property type="project" value="UniProtKB-UniRule"/>
</dbReference>
<dbReference type="GO" id="GO:0008033">
    <property type="term" value="P:tRNA processing"/>
    <property type="evidence" value="ECO:0007669"/>
    <property type="project" value="UniProtKB-KW"/>
</dbReference>
<dbReference type="CDD" id="cd10845">
    <property type="entry name" value="DSRM_RNAse_III_family"/>
    <property type="match status" value="1"/>
</dbReference>
<dbReference type="CDD" id="cd00593">
    <property type="entry name" value="RIBOc"/>
    <property type="match status" value="1"/>
</dbReference>
<dbReference type="FunFam" id="1.10.1520.10:FF:000001">
    <property type="entry name" value="Ribonuclease 3"/>
    <property type="match status" value="1"/>
</dbReference>
<dbReference type="FunFam" id="3.30.160.20:FF:000003">
    <property type="entry name" value="Ribonuclease 3"/>
    <property type="match status" value="1"/>
</dbReference>
<dbReference type="Gene3D" id="3.30.160.20">
    <property type="match status" value="1"/>
</dbReference>
<dbReference type="Gene3D" id="1.10.1520.10">
    <property type="entry name" value="Ribonuclease III domain"/>
    <property type="match status" value="1"/>
</dbReference>
<dbReference type="HAMAP" id="MF_00104">
    <property type="entry name" value="RNase_III"/>
    <property type="match status" value="1"/>
</dbReference>
<dbReference type="InterPro" id="IPR014720">
    <property type="entry name" value="dsRBD_dom"/>
</dbReference>
<dbReference type="InterPro" id="IPR011907">
    <property type="entry name" value="RNase_III"/>
</dbReference>
<dbReference type="InterPro" id="IPR000999">
    <property type="entry name" value="RNase_III_dom"/>
</dbReference>
<dbReference type="InterPro" id="IPR036389">
    <property type="entry name" value="RNase_III_sf"/>
</dbReference>
<dbReference type="NCBIfam" id="TIGR02191">
    <property type="entry name" value="RNaseIII"/>
    <property type="match status" value="1"/>
</dbReference>
<dbReference type="PANTHER" id="PTHR11207:SF0">
    <property type="entry name" value="RIBONUCLEASE 3"/>
    <property type="match status" value="1"/>
</dbReference>
<dbReference type="PANTHER" id="PTHR11207">
    <property type="entry name" value="RIBONUCLEASE III"/>
    <property type="match status" value="1"/>
</dbReference>
<dbReference type="Pfam" id="PF00035">
    <property type="entry name" value="dsrm"/>
    <property type="match status" value="1"/>
</dbReference>
<dbReference type="Pfam" id="PF14622">
    <property type="entry name" value="Ribonucleas_3_3"/>
    <property type="match status" value="1"/>
</dbReference>
<dbReference type="SMART" id="SM00358">
    <property type="entry name" value="DSRM"/>
    <property type="match status" value="1"/>
</dbReference>
<dbReference type="SMART" id="SM00535">
    <property type="entry name" value="RIBOc"/>
    <property type="match status" value="1"/>
</dbReference>
<dbReference type="SUPFAM" id="SSF54768">
    <property type="entry name" value="dsRNA-binding domain-like"/>
    <property type="match status" value="1"/>
</dbReference>
<dbReference type="SUPFAM" id="SSF69065">
    <property type="entry name" value="RNase III domain-like"/>
    <property type="match status" value="1"/>
</dbReference>
<dbReference type="PROSITE" id="PS50137">
    <property type="entry name" value="DS_RBD"/>
    <property type="match status" value="1"/>
</dbReference>
<dbReference type="PROSITE" id="PS00517">
    <property type="entry name" value="RNASE_3_1"/>
    <property type="match status" value="1"/>
</dbReference>
<dbReference type="PROSITE" id="PS50142">
    <property type="entry name" value="RNASE_3_2"/>
    <property type="match status" value="1"/>
</dbReference>
<organism>
    <name type="scientific">Streptococcus agalactiae serotype V (strain ATCC BAA-611 / 2603 V/R)</name>
    <dbReference type="NCBI Taxonomy" id="208435"/>
    <lineage>
        <taxon>Bacteria</taxon>
        <taxon>Bacillati</taxon>
        <taxon>Bacillota</taxon>
        <taxon>Bacilli</taxon>
        <taxon>Lactobacillales</taxon>
        <taxon>Streptococcaceae</taxon>
        <taxon>Streptococcus</taxon>
    </lineage>
</organism>
<evidence type="ECO:0000255" key="1">
    <source>
        <dbReference type="HAMAP-Rule" id="MF_00104"/>
    </source>
</evidence>
<evidence type="ECO:0000305" key="2"/>
<reference key="1">
    <citation type="journal article" date="2002" name="Proc. Natl. Acad. Sci. U.S.A.">
        <title>Complete genome sequence and comparative genomic analysis of an emerging human pathogen, serotype V Streptococcus agalactiae.</title>
        <authorList>
            <person name="Tettelin H."/>
            <person name="Masignani V."/>
            <person name="Cieslewicz M.J."/>
            <person name="Eisen J.A."/>
            <person name="Peterson S.N."/>
            <person name="Wessels M.R."/>
            <person name="Paulsen I.T."/>
            <person name="Nelson K.E."/>
            <person name="Margarit I."/>
            <person name="Read T.D."/>
            <person name="Madoff L.C."/>
            <person name="Wolf A.M."/>
            <person name="Beanan M.J."/>
            <person name="Brinkac L.M."/>
            <person name="Daugherty S.C."/>
            <person name="DeBoy R.T."/>
            <person name="Durkin A.S."/>
            <person name="Kolonay J.F."/>
            <person name="Madupu R."/>
            <person name="Lewis M.R."/>
            <person name="Radune D."/>
            <person name="Fedorova N.B."/>
            <person name="Scanlan D."/>
            <person name="Khouri H.M."/>
            <person name="Mulligan S."/>
            <person name="Carty H.A."/>
            <person name="Cline R.T."/>
            <person name="Van Aken S.E."/>
            <person name="Gill J."/>
            <person name="Scarselli M."/>
            <person name="Mora M."/>
            <person name="Iacobini E.T."/>
            <person name="Brettoni C."/>
            <person name="Galli G."/>
            <person name="Mariani M."/>
            <person name="Vegni F."/>
            <person name="Maione D."/>
            <person name="Rinaudo D."/>
            <person name="Rappuoli R."/>
            <person name="Telford J.L."/>
            <person name="Kasper D.L."/>
            <person name="Grandi G."/>
            <person name="Fraser C.M."/>
        </authorList>
    </citation>
    <scope>NUCLEOTIDE SEQUENCE [LARGE SCALE GENOMIC DNA]</scope>
    <source>
        <strain>ATCC BAA-611 / 2603 V/R</strain>
    </source>
</reference>
<proteinExistence type="inferred from homology"/>
<gene>
    <name evidence="1" type="primary">rnc</name>
    <name type="ordered locus">SAG0723</name>
</gene>
<accession>Q8E0K7</accession>
<comment type="function">
    <text evidence="1">Digests double-stranded RNA. Involved in the processing of primary rRNA transcript to yield the immediate precursors to the large and small rRNAs (23S and 16S). Processes some mRNAs, and tRNAs when they are encoded in the rRNA operon. Processes pre-crRNA and tracrRNA of type II CRISPR loci if present in the organism.</text>
</comment>
<comment type="catalytic activity">
    <reaction evidence="1">
        <text>Endonucleolytic cleavage to 5'-phosphomonoester.</text>
        <dbReference type="EC" id="3.1.26.3"/>
    </reaction>
</comment>
<comment type="cofactor">
    <cofactor evidence="1">
        <name>Mg(2+)</name>
        <dbReference type="ChEBI" id="CHEBI:18420"/>
    </cofactor>
</comment>
<comment type="subunit">
    <text evidence="1">Homodimer.</text>
</comment>
<comment type="subcellular location">
    <subcellularLocation>
        <location evidence="1">Cytoplasm</location>
    </subcellularLocation>
</comment>
<comment type="similarity">
    <text evidence="1">Belongs to the ribonuclease III family.</text>
</comment>
<comment type="sequence caution" evidence="2">
    <conflict type="erroneous initiation">
        <sequence resource="EMBL-CDS" id="AAM99610"/>
    </conflict>
    <text>Extended N-terminus.</text>
</comment>
<name>RNC_STRA5</name>
<keyword id="KW-0963">Cytoplasm</keyword>
<keyword id="KW-0255">Endonuclease</keyword>
<keyword id="KW-0378">Hydrolase</keyword>
<keyword id="KW-0460">Magnesium</keyword>
<keyword id="KW-0479">Metal-binding</keyword>
<keyword id="KW-0507">mRNA processing</keyword>
<keyword id="KW-0540">Nuclease</keyword>
<keyword id="KW-1185">Reference proteome</keyword>
<keyword id="KW-0694">RNA-binding</keyword>
<keyword id="KW-0698">rRNA processing</keyword>
<keyword id="KW-0699">rRNA-binding</keyword>
<keyword id="KW-0819">tRNA processing</keyword>
<sequence length="228" mass="25603">MKELRSKLEKDYGIVFANQELLDTAFTHTSYANEHRLLNISHNERLEFLGDAVLQLLISQYLFTKYPQKAEGDLSKLRSMIVREESLAGFSRLCGFDHYIKLGKGEEKSGGRNRDTILGDLFEAFLGALLLDKGVEVVHAFVNKVMIPHVEKGTYERVKDYKTSLQELLQSHGDVKIDYQVTNESGPAHAKEFEVTVSVNQENLSQGIGRSKKAAEQDAAKNALATLQ</sequence>
<feature type="chain" id="PRO_0000228589" description="Ribonuclease 3">
    <location>
        <begin position="1"/>
        <end position="228"/>
    </location>
</feature>
<feature type="domain" description="RNase III" evidence="1">
    <location>
        <begin position="5"/>
        <end position="134"/>
    </location>
</feature>
<feature type="domain" description="DRBM" evidence="1">
    <location>
        <begin position="160"/>
        <end position="228"/>
    </location>
</feature>
<feature type="active site" evidence="1">
    <location>
        <position position="51"/>
    </location>
</feature>
<feature type="active site" evidence="1">
    <location>
        <position position="123"/>
    </location>
</feature>
<feature type="binding site" evidence="1">
    <location>
        <position position="47"/>
    </location>
    <ligand>
        <name>Mg(2+)</name>
        <dbReference type="ChEBI" id="CHEBI:18420"/>
    </ligand>
</feature>
<feature type="binding site" evidence="1">
    <location>
        <position position="120"/>
    </location>
    <ligand>
        <name>Mg(2+)</name>
        <dbReference type="ChEBI" id="CHEBI:18420"/>
    </ligand>
</feature>
<feature type="binding site" evidence="1">
    <location>
        <position position="123"/>
    </location>
    <ligand>
        <name>Mg(2+)</name>
        <dbReference type="ChEBI" id="CHEBI:18420"/>
    </ligand>
</feature>
<protein>
    <recommendedName>
        <fullName evidence="1">Ribonuclease 3</fullName>
        <ecNumber evidence="1">3.1.26.3</ecNumber>
    </recommendedName>
    <alternativeName>
        <fullName evidence="1">Ribonuclease III</fullName>
        <shortName evidence="1">RNase III</shortName>
    </alternativeName>
</protein>